<feature type="chain" id="PRO_0000192088" description="Bifunctional purine biosynthesis protein PurH">
    <location>
        <begin position="1"/>
        <end position="521"/>
    </location>
</feature>
<feature type="domain" description="MGS-like" evidence="2">
    <location>
        <begin position="1"/>
        <end position="150"/>
    </location>
</feature>
<keyword id="KW-0378">Hydrolase</keyword>
<keyword id="KW-0511">Multifunctional enzyme</keyword>
<keyword id="KW-0658">Purine biosynthesis</keyword>
<keyword id="KW-1185">Reference proteome</keyword>
<keyword id="KW-0808">Transferase</keyword>
<organism>
    <name type="scientific">Corynebacterium efficiens (strain DSM 44549 / YS-314 / AJ 12310 / JCM 11189 / NBRC 100395)</name>
    <dbReference type="NCBI Taxonomy" id="196164"/>
    <lineage>
        <taxon>Bacteria</taxon>
        <taxon>Bacillati</taxon>
        <taxon>Actinomycetota</taxon>
        <taxon>Actinomycetes</taxon>
        <taxon>Mycobacteriales</taxon>
        <taxon>Corynebacteriaceae</taxon>
        <taxon>Corynebacterium</taxon>
    </lineage>
</organism>
<evidence type="ECO:0000255" key="1">
    <source>
        <dbReference type="HAMAP-Rule" id="MF_00139"/>
    </source>
</evidence>
<evidence type="ECO:0000255" key="2">
    <source>
        <dbReference type="PROSITE-ProRule" id="PRU01202"/>
    </source>
</evidence>
<comment type="catalytic activity">
    <reaction evidence="1">
        <text>(6R)-10-formyltetrahydrofolate + 5-amino-1-(5-phospho-beta-D-ribosyl)imidazole-4-carboxamide = 5-formamido-1-(5-phospho-D-ribosyl)imidazole-4-carboxamide + (6S)-5,6,7,8-tetrahydrofolate</text>
        <dbReference type="Rhea" id="RHEA:22192"/>
        <dbReference type="ChEBI" id="CHEBI:57453"/>
        <dbReference type="ChEBI" id="CHEBI:58467"/>
        <dbReference type="ChEBI" id="CHEBI:58475"/>
        <dbReference type="ChEBI" id="CHEBI:195366"/>
        <dbReference type="EC" id="2.1.2.3"/>
    </reaction>
</comment>
<comment type="catalytic activity">
    <reaction evidence="1">
        <text>IMP + H2O = 5-formamido-1-(5-phospho-D-ribosyl)imidazole-4-carboxamide</text>
        <dbReference type="Rhea" id="RHEA:18445"/>
        <dbReference type="ChEBI" id="CHEBI:15377"/>
        <dbReference type="ChEBI" id="CHEBI:58053"/>
        <dbReference type="ChEBI" id="CHEBI:58467"/>
        <dbReference type="EC" id="3.5.4.10"/>
    </reaction>
</comment>
<comment type="pathway">
    <text evidence="1">Purine metabolism; IMP biosynthesis via de novo pathway; 5-formamido-1-(5-phospho-D-ribosyl)imidazole-4-carboxamide from 5-amino-1-(5-phospho-D-ribosyl)imidazole-4-carboxamide (10-formyl THF route): step 1/1.</text>
</comment>
<comment type="pathway">
    <text evidence="1">Purine metabolism; IMP biosynthesis via de novo pathway; IMP from 5-formamido-1-(5-phospho-D-ribosyl)imidazole-4-carboxamide: step 1/1.</text>
</comment>
<comment type="domain">
    <text evidence="1">The IMP cyclohydrolase activity resides in the N-terminal region.</text>
</comment>
<comment type="similarity">
    <text evidence="1">Belongs to the PurH family.</text>
</comment>
<protein>
    <recommendedName>
        <fullName evidence="1">Bifunctional purine biosynthesis protein PurH</fullName>
    </recommendedName>
    <domain>
        <recommendedName>
            <fullName evidence="1">Phosphoribosylaminoimidazolecarboxamide formyltransferase</fullName>
            <ecNumber evidence="1">2.1.2.3</ecNumber>
        </recommendedName>
        <alternativeName>
            <fullName evidence="1">AICAR transformylase</fullName>
        </alternativeName>
    </domain>
    <domain>
        <recommendedName>
            <fullName evidence="1">IMP cyclohydrolase</fullName>
            <ecNumber evidence="1">3.5.4.10</ecNumber>
        </recommendedName>
        <alternativeName>
            <fullName evidence="1">ATIC</fullName>
        </alternativeName>
        <alternativeName>
            <fullName evidence="1">IMP synthase</fullName>
        </alternativeName>
        <alternativeName>
            <fullName evidence="1">Inosinicase</fullName>
        </alternativeName>
    </domain>
</protein>
<proteinExistence type="inferred from homology"/>
<accession>Q8FR29</accession>
<gene>
    <name evidence="1" type="primary">purH</name>
    <name type="ordered locus">CE0937</name>
</gene>
<reference key="1">
    <citation type="journal article" date="2003" name="Genome Res.">
        <title>Comparative complete genome sequence analysis of the amino acid replacements responsible for the thermostability of Corynebacterium efficiens.</title>
        <authorList>
            <person name="Nishio Y."/>
            <person name="Nakamura Y."/>
            <person name="Kawarabayasi Y."/>
            <person name="Usuda Y."/>
            <person name="Kimura E."/>
            <person name="Sugimoto S."/>
            <person name="Matsui K."/>
            <person name="Yamagishi A."/>
            <person name="Kikuchi H."/>
            <person name="Ikeo K."/>
            <person name="Gojobori T."/>
        </authorList>
    </citation>
    <scope>NUCLEOTIDE SEQUENCE [LARGE SCALE GENOMIC DNA]</scope>
    <source>
        <strain>DSM 44549 / YS-314 / AJ 12310 / JCM 11189 / NBRC 100395</strain>
    </source>
</reference>
<name>PUR9_COREF</name>
<sequence length="521" mass="55454">MSEDRKAIKRALISVYDKTGLEDLAQALHRAGVEIVSTGSTAAKIADLGIPVTPVEELTGFPECLEGRVKTLHPKVHAGILADTRKDDHLRQLDELGVTPFQLVVVNLYPFAETVASGADFDDCVEQIDIGGPSMVRAAAKNHPSVAVVTSPGQYEDVVSVLNTGGFSRAERTKLAAEAFRHTATYDVTVATWISEQLSAADTELEFPGWIGSTSTLARSLRYGENPHQSAALYVSHGASGLAQATQLHGKEMSYNNYTDSDAAWRAAWDHERPCVAIIKHANPCGIAVSDESIAAAHRQAHACDSVSAFGGVIASNREVSVEMAEQVAEIFTEVIIAPSYEEGAVEVLSQKKNIRILQAEAPVREGFETREISGGLLVQERDLIHAEGDNPANWTLAAGEAVSAEVLKDLEFAWTAVRSVKSNAILLAKDGATVGVGMGQVNRVDSARLAVDRAGEERATGSVAASDAFFPFADGFEVLAQAGITAVVQPGGSIRDDEVIEAANKAGVTMYLTGARHFSH</sequence>
<dbReference type="EC" id="2.1.2.3" evidence="1"/>
<dbReference type="EC" id="3.5.4.10" evidence="1"/>
<dbReference type="EMBL" id="BA000035">
    <property type="protein sequence ID" value="BAC17747.1"/>
    <property type="molecule type" value="Genomic_DNA"/>
</dbReference>
<dbReference type="RefSeq" id="WP_006770098.1">
    <property type="nucleotide sequence ID" value="NC_004369.1"/>
</dbReference>
<dbReference type="SMR" id="Q8FR29"/>
<dbReference type="STRING" id="196164.gene:10741343"/>
<dbReference type="KEGG" id="cef:CE0937"/>
<dbReference type="eggNOG" id="COG0138">
    <property type="taxonomic scope" value="Bacteria"/>
</dbReference>
<dbReference type="HOGENOM" id="CLU_016316_5_2_11"/>
<dbReference type="OrthoDB" id="9802065at2"/>
<dbReference type="UniPathway" id="UPA00074">
    <property type="reaction ID" value="UER00133"/>
</dbReference>
<dbReference type="UniPathway" id="UPA00074">
    <property type="reaction ID" value="UER00135"/>
</dbReference>
<dbReference type="Proteomes" id="UP000001409">
    <property type="component" value="Chromosome"/>
</dbReference>
<dbReference type="GO" id="GO:0005829">
    <property type="term" value="C:cytosol"/>
    <property type="evidence" value="ECO:0007669"/>
    <property type="project" value="TreeGrafter"/>
</dbReference>
<dbReference type="GO" id="GO:0003937">
    <property type="term" value="F:IMP cyclohydrolase activity"/>
    <property type="evidence" value="ECO:0007669"/>
    <property type="project" value="UniProtKB-UniRule"/>
</dbReference>
<dbReference type="GO" id="GO:0004643">
    <property type="term" value="F:phosphoribosylaminoimidazolecarboxamide formyltransferase activity"/>
    <property type="evidence" value="ECO:0007669"/>
    <property type="project" value="UniProtKB-UniRule"/>
</dbReference>
<dbReference type="GO" id="GO:0006189">
    <property type="term" value="P:'de novo' IMP biosynthetic process"/>
    <property type="evidence" value="ECO:0007669"/>
    <property type="project" value="UniProtKB-UniRule"/>
</dbReference>
<dbReference type="CDD" id="cd01421">
    <property type="entry name" value="IMPCH"/>
    <property type="match status" value="1"/>
</dbReference>
<dbReference type="FunFam" id="3.40.140.20:FF:000001">
    <property type="entry name" value="Bifunctional purine biosynthesis protein PurH"/>
    <property type="match status" value="1"/>
</dbReference>
<dbReference type="FunFam" id="3.40.140.20:FF:000002">
    <property type="entry name" value="Bifunctional purine biosynthesis protein PurH"/>
    <property type="match status" value="1"/>
</dbReference>
<dbReference type="FunFam" id="3.40.50.1380:FF:000001">
    <property type="entry name" value="Bifunctional purine biosynthesis protein PurH"/>
    <property type="match status" value="1"/>
</dbReference>
<dbReference type="Gene3D" id="3.40.140.20">
    <property type="match status" value="2"/>
</dbReference>
<dbReference type="Gene3D" id="3.40.50.1380">
    <property type="entry name" value="Methylglyoxal synthase-like domain"/>
    <property type="match status" value="1"/>
</dbReference>
<dbReference type="HAMAP" id="MF_00139">
    <property type="entry name" value="PurH"/>
    <property type="match status" value="1"/>
</dbReference>
<dbReference type="InterPro" id="IPR024051">
    <property type="entry name" value="AICAR_Tfase_dup_dom_sf"/>
</dbReference>
<dbReference type="InterPro" id="IPR016193">
    <property type="entry name" value="Cytidine_deaminase-like"/>
</dbReference>
<dbReference type="InterPro" id="IPR011607">
    <property type="entry name" value="MGS-like_dom"/>
</dbReference>
<dbReference type="InterPro" id="IPR036914">
    <property type="entry name" value="MGS-like_dom_sf"/>
</dbReference>
<dbReference type="InterPro" id="IPR002695">
    <property type="entry name" value="PurH-like"/>
</dbReference>
<dbReference type="NCBIfam" id="NF002049">
    <property type="entry name" value="PRK00881.1"/>
    <property type="match status" value="1"/>
</dbReference>
<dbReference type="NCBIfam" id="TIGR00355">
    <property type="entry name" value="purH"/>
    <property type="match status" value="1"/>
</dbReference>
<dbReference type="PANTHER" id="PTHR11692:SF0">
    <property type="entry name" value="BIFUNCTIONAL PURINE BIOSYNTHESIS PROTEIN ATIC"/>
    <property type="match status" value="1"/>
</dbReference>
<dbReference type="PANTHER" id="PTHR11692">
    <property type="entry name" value="BIFUNCTIONAL PURINE BIOSYNTHESIS PROTEIN PURH"/>
    <property type="match status" value="1"/>
</dbReference>
<dbReference type="Pfam" id="PF01808">
    <property type="entry name" value="AICARFT_IMPCHas"/>
    <property type="match status" value="1"/>
</dbReference>
<dbReference type="Pfam" id="PF02142">
    <property type="entry name" value="MGS"/>
    <property type="match status" value="1"/>
</dbReference>
<dbReference type="PIRSF" id="PIRSF000414">
    <property type="entry name" value="AICARFT_IMPCHas"/>
    <property type="match status" value="1"/>
</dbReference>
<dbReference type="SMART" id="SM00798">
    <property type="entry name" value="AICARFT_IMPCHas"/>
    <property type="match status" value="1"/>
</dbReference>
<dbReference type="SMART" id="SM00851">
    <property type="entry name" value="MGS"/>
    <property type="match status" value="1"/>
</dbReference>
<dbReference type="SUPFAM" id="SSF53927">
    <property type="entry name" value="Cytidine deaminase-like"/>
    <property type="match status" value="1"/>
</dbReference>
<dbReference type="SUPFAM" id="SSF52335">
    <property type="entry name" value="Methylglyoxal synthase-like"/>
    <property type="match status" value="1"/>
</dbReference>
<dbReference type="PROSITE" id="PS51855">
    <property type="entry name" value="MGS"/>
    <property type="match status" value="1"/>
</dbReference>